<reference evidence="4" key="1">
    <citation type="journal article" date="2007" name="ChemBioChem">
        <title>The cyclotide fingerprint in Oldenlandia affinis: elucidation of chemically modified, linear and novel macrocyclic peptides.</title>
        <authorList>
            <person name="Plan M.R.R."/>
            <person name="Goeransson U."/>
            <person name="Clark R.J."/>
            <person name="Daly N.L."/>
            <person name="Colgrave M.L."/>
            <person name="Craik D.J."/>
        </authorList>
    </citation>
    <scope>PROTEIN SEQUENCE</scope>
    <scope>MASS SPECTROMETRY</scope>
</reference>
<accession>P85133</accession>
<dbReference type="SMR" id="P85133"/>
<dbReference type="TCDB" id="8.B.33.1.3">
    <property type="family name" value="the trpa1-activating peptide, tx ueg-12-1 (tx-ueg) family"/>
</dbReference>
<dbReference type="GO" id="GO:0006952">
    <property type="term" value="P:defense response"/>
    <property type="evidence" value="ECO:0007669"/>
    <property type="project" value="UniProtKB-KW"/>
</dbReference>
<dbReference type="InterPro" id="IPR005535">
    <property type="entry name" value="Cyclotide"/>
</dbReference>
<dbReference type="InterPro" id="IPR012324">
    <property type="entry name" value="Cyclotide_moebius_CS"/>
</dbReference>
<dbReference type="InterPro" id="IPR036146">
    <property type="entry name" value="Cyclotide_sf"/>
</dbReference>
<dbReference type="Pfam" id="PF03784">
    <property type="entry name" value="Cyclotide"/>
    <property type="match status" value="1"/>
</dbReference>
<dbReference type="PIRSF" id="PIRSF037891">
    <property type="entry name" value="Cycloviolacin"/>
    <property type="match status" value="1"/>
</dbReference>
<dbReference type="SUPFAM" id="SSF57038">
    <property type="entry name" value="Cyclotides"/>
    <property type="match status" value="1"/>
</dbReference>
<dbReference type="PROSITE" id="PS51052">
    <property type="entry name" value="CYCLOTIDE"/>
    <property type="match status" value="1"/>
</dbReference>
<dbReference type="PROSITE" id="PS60009">
    <property type="entry name" value="CYCLOTIDE_MOEBIUS"/>
    <property type="match status" value="1"/>
</dbReference>
<name>KAB15_OLDAF</name>
<comment type="function">
    <text evidence="4">Probably participates in a plant defense mechanism.</text>
</comment>
<comment type="domain">
    <text evidence="1">The presence of a 'disulfide through disulfide knot' structurally defines this protein as a knottin.</text>
</comment>
<comment type="PTM">
    <text evidence="2 3">This is a cyclic peptide.</text>
</comment>
<comment type="mass spectrometry"/>
<comment type="similarity">
    <text evidence="2">Belongs to the cyclotide family. Moebius subfamily.</text>
</comment>
<comment type="caution">
    <text evidence="3">This peptide is cyclic. The start position was chosen by similarity to OAK1 (kalata-B1) for which the DNA sequence is known.</text>
</comment>
<keyword id="KW-0903">Direct protein sequencing</keyword>
<keyword id="KW-1015">Disulfide bond</keyword>
<keyword id="KW-0960">Knottin</keyword>
<keyword id="KW-0611">Plant defense</keyword>
<proteinExistence type="evidence at protein level"/>
<evidence type="ECO:0000250" key="1">
    <source>
        <dbReference type="UniProtKB" id="P83836"/>
    </source>
</evidence>
<evidence type="ECO:0000255" key="2">
    <source>
        <dbReference type="PROSITE-ProRule" id="PRU00395"/>
    </source>
</evidence>
<evidence type="ECO:0000269" key="3">
    <source>
    </source>
</evidence>
<evidence type="ECO:0000305" key="4"/>
<feature type="peptide" id="PRO_0000294962" description="Kalata-B15" evidence="2 3">
    <location>
        <begin position="1"/>
        <end position="29"/>
    </location>
</feature>
<feature type="disulfide bond" evidence="1 2">
    <location>
        <begin position="5"/>
        <end position="19"/>
    </location>
</feature>
<feature type="disulfide bond" evidence="1 2">
    <location>
        <begin position="9"/>
        <end position="21"/>
    </location>
</feature>
<feature type="disulfide bond" evidence="1 2">
    <location>
        <begin position="14"/>
        <end position="26"/>
    </location>
</feature>
<feature type="cross-link" description="Cyclopeptide (Gly-Asp)" evidence="3">
    <location>
        <begin position="1"/>
        <end position="29"/>
    </location>
</feature>
<protein>
    <recommendedName>
        <fullName>Kalata-B15</fullName>
    </recommendedName>
</protein>
<sequence>GLPVCGESCFGGSCYTPGCSCTWPICTRD</sequence>
<organism>
    <name type="scientific">Oldenlandia affinis</name>
    <dbReference type="NCBI Taxonomy" id="60225"/>
    <lineage>
        <taxon>Eukaryota</taxon>
        <taxon>Viridiplantae</taxon>
        <taxon>Streptophyta</taxon>
        <taxon>Embryophyta</taxon>
        <taxon>Tracheophyta</taxon>
        <taxon>Spermatophyta</taxon>
        <taxon>Magnoliopsida</taxon>
        <taxon>eudicotyledons</taxon>
        <taxon>Gunneridae</taxon>
        <taxon>Pentapetalae</taxon>
        <taxon>asterids</taxon>
        <taxon>lamiids</taxon>
        <taxon>Gentianales</taxon>
        <taxon>Rubiaceae</taxon>
        <taxon>Rubioideae</taxon>
        <taxon>Spermacoceae</taxon>
        <taxon>Hedyotis-Oldenlandia complex</taxon>
        <taxon>Oldenlandia</taxon>
    </lineage>
</organism>